<organism>
    <name type="scientific">Saccharomyces cerevisiae (strain JAY291)</name>
    <name type="common">Baker's yeast</name>
    <dbReference type="NCBI Taxonomy" id="574961"/>
    <lineage>
        <taxon>Eukaryota</taxon>
        <taxon>Fungi</taxon>
        <taxon>Dikarya</taxon>
        <taxon>Ascomycota</taxon>
        <taxon>Saccharomycotina</taxon>
        <taxon>Saccharomycetes</taxon>
        <taxon>Saccharomycetales</taxon>
        <taxon>Saccharomycetaceae</taxon>
        <taxon>Saccharomyces</taxon>
    </lineage>
</organism>
<reference key="1">
    <citation type="journal article" date="2009" name="Genome Res.">
        <title>Genome structure of a Saccharomyces cerevisiae strain widely used in bioethanol production.</title>
        <authorList>
            <person name="Argueso J.L."/>
            <person name="Carazzolle M.F."/>
            <person name="Mieczkowski P.A."/>
            <person name="Duarte F.M."/>
            <person name="Netto O.V.C."/>
            <person name="Missawa S.K."/>
            <person name="Galzerani F."/>
            <person name="Costa G.G.L."/>
            <person name="Vidal R.O."/>
            <person name="Noronha M.F."/>
            <person name="Dominska M."/>
            <person name="Andrietta M.G.S."/>
            <person name="Andrietta S.R."/>
            <person name="Cunha A.F."/>
            <person name="Gomes L.H."/>
            <person name="Tavares F.C.A."/>
            <person name="Alcarde A.R."/>
            <person name="Dietrich F.S."/>
            <person name="McCusker J.H."/>
            <person name="Petes T.D."/>
            <person name="Pereira G.A.G."/>
        </authorList>
    </citation>
    <scope>NUCLEOTIDE SEQUENCE [LARGE SCALE GENOMIC DNA]</scope>
    <source>
        <strain>JAY291</strain>
    </source>
</reference>
<comment type="function">
    <text evidence="1">May be involved in the modulation of rDNA transcription.</text>
</comment>
<comment type="similarity">
    <text evidence="4">Belongs to the RRT5 family.</text>
</comment>
<name>RRT5_YEAS2</name>
<evidence type="ECO:0000250" key="1"/>
<evidence type="ECO:0000255" key="2">
    <source>
        <dbReference type="PROSITE-ProRule" id="PRU00176"/>
    </source>
</evidence>
<evidence type="ECO:0000256" key="3">
    <source>
        <dbReference type="SAM" id="MobiDB-lite"/>
    </source>
</evidence>
<evidence type="ECO:0000305" key="4"/>
<dbReference type="EMBL" id="ACFL01000453">
    <property type="protein sequence ID" value="EEU04185.1"/>
    <property type="molecule type" value="Genomic_DNA"/>
</dbReference>
<dbReference type="Proteomes" id="UP000008073">
    <property type="component" value="Unassembled WGS sequence"/>
</dbReference>
<dbReference type="GO" id="GO:0005737">
    <property type="term" value="C:cytoplasm"/>
    <property type="evidence" value="ECO:0007669"/>
    <property type="project" value="TreeGrafter"/>
</dbReference>
<dbReference type="GO" id="GO:0005634">
    <property type="term" value="C:nucleus"/>
    <property type="evidence" value="ECO:0007669"/>
    <property type="project" value="TreeGrafter"/>
</dbReference>
<dbReference type="GO" id="GO:1990904">
    <property type="term" value="C:ribonucleoprotein complex"/>
    <property type="evidence" value="ECO:0007669"/>
    <property type="project" value="TreeGrafter"/>
</dbReference>
<dbReference type="GO" id="GO:0003729">
    <property type="term" value="F:mRNA binding"/>
    <property type="evidence" value="ECO:0007669"/>
    <property type="project" value="TreeGrafter"/>
</dbReference>
<dbReference type="CDD" id="cd12409">
    <property type="entry name" value="RRM1_RRT5"/>
    <property type="match status" value="1"/>
</dbReference>
<dbReference type="CDD" id="cd12410">
    <property type="entry name" value="RRM2_RRT5"/>
    <property type="match status" value="1"/>
</dbReference>
<dbReference type="FunFam" id="3.30.70.330:FF:000964">
    <property type="entry name" value="Regulator of rDNA transcription protein 5"/>
    <property type="match status" value="1"/>
</dbReference>
<dbReference type="Gene3D" id="3.30.70.330">
    <property type="match status" value="1"/>
</dbReference>
<dbReference type="InterPro" id="IPR012677">
    <property type="entry name" value="Nucleotide-bd_a/b_plait_sf"/>
</dbReference>
<dbReference type="InterPro" id="IPR035979">
    <property type="entry name" value="RBD_domain_sf"/>
</dbReference>
<dbReference type="InterPro" id="IPR000504">
    <property type="entry name" value="RRM_dom"/>
</dbReference>
<dbReference type="InterPro" id="IPR034244">
    <property type="entry name" value="Rrt5_RRM1"/>
</dbReference>
<dbReference type="InterPro" id="IPR034247">
    <property type="entry name" value="Rrt5_RRM2"/>
</dbReference>
<dbReference type="InterPro" id="IPR050374">
    <property type="entry name" value="RRT5_SRSF_SR"/>
</dbReference>
<dbReference type="PANTHER" id="PTHR23003:SF54">
    <property type="entry name" value="REGULATOR OF RDNA TRANSCRIPTION PROTEIN 5"/>
    <property type="match status" value="1"/>
</dbReference>
<dbReference type="PANTHER" id="PTHR23003">
    <property type="entry name" value="RNA RECOGNITION MOTIF RRM DOMAIN CONTAINING PROTEIN"/>
    <property type="match status" value="1"/>
</dbReference>
<dbReference type="Pfam" id="PF00076">
    <property type="entry name" value="RRM_1"/>
    <property type="match status" value="1"/>
</dbReference>
<dbReference type="SMART" id="SM00360">
    <property type="entry name" value="RRM"/>
    <property type="match status" value="1"/>
</dbReference>
<dbReference type="SUPFAM" id="SSF54928">
    <property type="entry name" value="RNA-binding domain, RBD"/>
    <property type="match status" value="1"/>
</dbReference>
<dbReference type="PROSITE" id="PS50102">
    <property type="entry name" value="RRM"/>
    <property type="match status" value="1"/>
</dbReference>
<feature type="chain" id="PRO_0000404362" description="Regulator of rDNA transcription protein 5">
    <location>
        <begin position="1"/>
        <end position="289"/>
    </location>
</feature>
<feature type="domain" description="RRM" evidence="2">
    <location>
        <begin position="18"/>
        <end position="105"/>
    </location>
</feature>
<feature type="region of interest" description="Disordered" evidence="3">
    <location>
        <begin position="235"/>
        <end position="289"/>
    </location>
</feature>
<feature type="compositionally biased region" description="Pro residues" evidence="3">
    <location>
        <begin position="239"/>
        <end position="255"/>
    </location>
</feature>
<feature type="compositionally biased region" description="Polar residues" evidence="3">
    <location>
        <begin position="279"/>
        <end position="289"/>
    </location>
</feature>
<gene>
    <name type="primary">RRT5</name>
    <name type="ORF">C1Q_05583</name>
</gene>
<proteinExistence type="inferred from homology"/>
<sequence>MTEQVNNDTTSDTTTTITTVYISNLPFTASERDLHAFLNNYGASSVLIPTQTVRRFSKRHNSNPRKPLGIAFAQFANNTLALKAIQDLNGTVFQNQKLFLKLHVPYEADSTPDTDVKKPKEKNKVKKTPETAADTVYCHDLPDDITDSEIRELFQLYSPQEIWIYRSKVYRRKCIPFAPHQITAALVTLQSETPIGDICDSVAKTATLRGKSIIVKPAYVSKIQEIKQLVKDNLTNARDPPPAALAEPAPAPAPVEPAEQVQEGQDNAETNDVPPPPASSSDRPTVAAT</sequence>
<keyword id="KW-0694">RNA-binding</keyword>
<keyword id="KW-0804">Transcription</keyword>
<keyword id="KW-0805">Transcription regulation</keyword>
<protein>
    <recommendedName>
        <fullName>Regulator of rDNA transcription protein 5</fullName>
    </recommendedName>
</protein>
<accession>C7GYD5</accession>